<protein>
    <recommendedName>
        <fullName>Huntingtin</fullName>
    </recommendedName>
    <alternativeName>
        <fullName>Huntington disease protein homolog</fullName>
        <shortName>HD protein homolog</shortName>
    </alternativeName>
    <component>
        <recommendedName>
            <fullName evidence="2">Huntingtin, myristoylated N-terminal fragment</fullName>
        </recommendedName>
    </component>
</protein>
<accession>P42859</accession>
<organism>
    <name type="scientific">Mus musculus</name>
    <name type="common">Mouse</name>
    <dbReference type="NCBI Taxonomy" id="10090"/>
    <lineage>
        <taxon>Eukaryota</taxon>
        <taxon>Metazoa</taxon>
        <taxon>Chordata</taxon>
        <taxon>Craniata</taxon>
        <taxon>Vertebrata</taxon>
        <taxon>Euteleostomi</taxon>
        <taxon>Mammalia</taxon>
        <taxon>Eutheria</taxon>
        <taxon>Euarchontoglires</taxon>
        <taxon>Glires</taxon>
        <taxon>Rodentia</taxon>
        <taxon>Myomorpha</taxon>
        <taxon>Muroidea</taxon>
        <taxon>Muridae</taxon>
        <taxon>Murinae</taxon>
        <taxon>Mus</taxon>
        <taxon>Mus</taxon>
    </lineage>
</organism>
<sequence>MATLEKLMKAFESLKSFQQQQQQQPPPQAPPPPPPPPPQPPQPPPQGQPPPPPPPLPGPAEEPLHRPKKELSATKKDRVNHCLTICENIVAQSLRNSPEFQKLLGIAMELFLLCSNDAESDVRMVADECLNKVIKALMDSNLPRLQLELYKEIKKNGAPRSLRAALWRFAELAHLVRPQKCRPYLVNLLPCLTRTSKRPEESVQETLAAAVPKIMASFGNFANDNEIKVLLKAFIANLKSSSPTVRRTAAGSAVSICQHSRRTQYFYNWLLNVLLGLLVPMEEEHSTLLILGVLLTLRCLVPLLQQQVKDTSLKGSFGVTRKEMEVSPSTEQLVQVYELTLHHTQHQDHNVVTGALELLQQLFRTPPPELLQALTTPGGLGQLTLVQEEARGRGRSGSIVELLAGGGSSCSPVLSRKQKGKVLLGEEEALEDDSESRSDVSSSAFAASVKSEIGGELAASSGVSTPGSVGHDIITEQPRSQHTLQADSVDLSGCDLTSAATDGDEEDILSHSSSQFSAVPSDPAMDLNDGTQASSPISDSSQTTTEGPDSAVTPSDSSEIVLDGADSQYLGMQIGQPQEDDEEGAAGVLSGEVSDVFRNSSLALQQAHLLERMGHSRQPSDSSIDKYVTRDEVAEASDPESKPCRIKGDIGQPNDDDSAPLVHCVRLLSASFLLTGEKKALVPDRDVRVSVKALALSCIGAAVALHPESFFSRLYKVPLNTTESTEEQYVSDILNYIDHGDPQVRGATAILCGTLVYSILSRSRLRVGDWLGNIRTLTGNTFSLVDCIPLLQKTLKDESSVTCKLACTAVRHCVLSLCSSSYSDLGLQLLIDMLPLKNSSYWLVRTELLDTLAEIDFRLVSFLEAKAESLHRGAHHYTGFLKLQERVLNNVVIYLLGDEDPRVRHVAATSLTRLVPKLFYKCDQGQADPVVAVARDQSSVYLKLLMHETQPPSHFSVSTITRIYRGYSLLPSITDVTMENNLSRVVAAVSHELITSTTRALTFGCCEALCLLSAAFPVCTWSLGWHCGVPPLSASDESRKSCTVGMASMILTLLSSAWFPLDLSAHQDALILAGNLLAASAPKSLRSSWTSEEEANSAATRQEEIWPALGDRTLVPLVEQLFSHLLKVINICAHVLDDVTPGPAIKAALPSLTNPPSLSPIRRKGKEKEPGEQASTPMSPKKVGEASAASRQSDTSGPVTASKSSSLGSFYHLPSYLKLHDVLKATHANYKVTLDLQNSTEKFGGFLRSALDVLSQILELATLQDIGKCVEEVLGYLKSCFSREPMMATVCVQQLLKTLFGTNLASQFDGLSSNPSKSQCRAQRLGSSSVRPGLYHYCFMAPYTHFTQALADASLRNMVQAEQERDASGWFDVLQKVSAQLKTNLTSVTKNRADKNAIHNHIRLFEPLVIKALKQYTTTTSVQLQKQVLDLLAQLVQLRVNYCLLDSDQVFIGFVLKQFEYIEVGQFRESEAIIPNIFFFLVLLSYERYHSKQIIGIPKIIQLCDGIMASGRKAVTHAIPALQPIVHDLFVLRGTNKADAGKELETQKEVVVSMLLRLIQYHQVLEMFILVLQQCHKENEDKWKRLSRQVADIILPMLAKQQMHIDSHEALGVLNTLFEILAPSSLRPVDMLLRSMFITPSTMASVSTVQLWISGILAILRVLISQSTEDIVLCRIQELSFSPHLLSCPVINRLRGGGGNVTLGECSEGKQKSLPEDTFSRFLLQLVGILLEDIVTKQLKVDMSEQQHTFYCQELGTLLMCLIHIFKSGMFRRITAAATRLFTSDGCEGSFYTLESLNARVRSMVPTHPALVLLWCQILLLINHTDHRWWAEVQQTPKRHSLSCTKSLNPQKSGEEEDSGSAAQLGMCNREIVRRGALILFCDYVCQNLHDSEHLTWLIVNHIQDLISLSHEPPVQDFISAIHRNSAASGLFIQAIQSRCENLSTPTTLKKTLQCLEGIHLSQSGAVLTLYVDRLLGTPFRALARMVDTLACRRVEMLLAANLQSSMAQLPEEELNRIQEHLQNSGLAQRHQRLYSLLDRFRLSTVQDSLSPLPPVTSHPLDGDGHTSLETVSPDKDWYLQLVRSQCWTRSDSALLEGAELVNRIPAEDMNDFMMSSEFNLSLLAPCLSLGMSEIANGQKSPLFEAARGVILNRVTSVVQQLPAVHQVFQPFLPIEPTAYWNKLNDLLGDTTSYQSLTILARALAQYLVVLSKVPAHLHLPPEKEGDTVKFVVMTVEALSWHLIHEQIPLSLDLQAGLDCCCLALQVPGLWGVLSSPEYVTHACSLIHCVRFILEAIAVQPGDQLLGPESRSHTPRAVRKEEVDSDIQNLSHVTSACEMVADMVESLQSVLALGHKRNSTLPSFLTAVLKNIVISLARLPLVNSYTRVPPLVWKLGWSPKPGGDFGTVFPEIPVEFLQEKEILKEFIYRINTLGWTNRTQFEETWATLLGVLVTQPLVMEQEESPPEEDTERTQIHVLAVQAITSLVLSAMTVPVAGNPAVSCLEQQPRNKPLKALDTRFGRKLSMIRGIVEQEIQEMVSQRENTATHHSHQAWDPVPSLLPATTGALISHDKLLLQINPEREPGNMSYKLGQVSIHSVWLGNNITPLREEEWDEEEEEESDVPAPTSPPVSPVNSRKHRAGVDIHSCSQFLLELYSRWILPSSAARRTPVILISEVVRSLLVVSDLFTERTQFEMMYLTLTELRRVHPSEDEILIQYLVPATCKAAAVLGMDKTVAEPVSRLLESTLRSSHLPSQIGALHGILYVLECDLLDDTAKQLIPVVSDYLLSNLKGIAHCVNIHSQQHVLVMCATAFYLMENYPLDVGPEFSASVIQMCGVMLSGSEESTPSIIYHCALRGLERLLLSEQLSRLDTESLVKLSVDRVNVQSPHRAMAALGLMLTCMYTGKEKASPGRASDPSPATPDSESVIVAMERVSVLFDRIRKGFPCEARVVARILPQFLDDFFPPQDVMNKVIGEFLSNQQPYPQFMATVVYKVFQTLHSAGQSSMVRDWVMLSLSNFTQRTPVAMAMWSLSCFLVSASTSPWVSAILPHVISRMGKLEQVDVNLFCLVATDFYRHQIEEEFDRRAFQSVFEVVAAPGSPYHRLLACLQNVHKVTTC</sequence>
<dbReference type="EMBL" id="L23312">
    <property type="protein sequence ID" value="AAA37799.1"/>
    <property type="molecule type" value="mRNA"/>
</dbReference>
<dbReference type="EMBL" id="L23313">
    <property type="protein sequence ID" value="AAA37800.1"/>
    <property type="molecule type" value="mRNA"/>
</dbReference>
<dbReference type="EMBL" id="L28827">
    <property type="protein sequence ID" value="AAA89100.1"/>
    <property type="status" value="ALT_SEQ"/>
    <property type="molecule type" value="mRNA"/>
</dbReference>
<dbReference type="EMBL" id="U24233">
    <property type="protein sequence ID" value="AAC52218.1"/>
    <property type="molecule type" value="mRNA"/>
</dbReference>
<dbReference type="EMBL" id="AH003368">
    <property type="protein sequence ID" value="AAA91085.1"/>
    <property type="molecule type" value="Genomic_DNA"/>
</dbReference>
<dbReference type="PIR" id="I49729">
    <property type="entry name" value="I49729"/>
</dbReference>
<dbReference type="BMRB" id="P42859"/>
<dbReference type="SMR" id="P42859"/>
<dbReference type="CORUM" id="P42859"/>
<dbReference type="DIP" id="DIP-41430N"/>
<dbReference type="FunCoup" id="P42859">
    <property type="interactions" value="2767"/>
</dbReference>
<dbReference type="IntAct" id="P42859">
    <property type="interactions" value="22"/>
</dbReference>
<dbReference type="MINT" id="P42859"/>
<dbReference type="STRING" id="10090.ENSMUSP00000078945"/>
<dbReference type="ChEMBL" id="CHEMBL1250362"/>
<dbReference type="GlyGen" id="P42859">
    <property type="glycosylation" value="4 sites, 1 O-linked glycan (1 site)"/>
</dbReference>
<dbReference type="iPTMnet" id="P42859"/>
<dbReference type="PhosphoSitePlus" id="P42859"/>
<dbReference type="SwissPalm" id="P42859"/>
<dbReference type="jPOST" id="P42859"/>
<dbReference type="PaxDb" id="10090-ENSMUSP00000078945"/>
<dbReference type="PeptideAtlas" id="P42859"/>
<dbReference type="ProteomicsDB" id="269778">
    <molecule id="P42859-1"/>
</dbReference>
<dbReference type="ProteomicsDB" id="269779">
    <molecule id="P42859-2"/>
</dbReference>
<dbReference type="Pumba" id="P42859"/>
<dbReference type="AGR" id="MGI:96067"/>
<dbReference type="MGI" id="MGI:96067">
    <property type="gene designation" value="Htt"/>
</dbReference>
<dbReference type="eggNOG" id="ENOG502QR1D">
    <property type="taxonomic scope" value="Eukaryota"/>
</dbReference>
<dbReference type="InParanoid" id="P42859"/>
<dbReference type="PhylomeDB" id="P42859"/>
<dbReference type="ChiTaRS" id="Htt">
    <property type="organism name" value="mouse"/>
</dbReference>
<dbReference type="PRO" id="PR:P42859"/>
<dbReference type="Proteomes" id="UP000000589">
    <property type="component" value="Unplaced"/>
</dbReference>
<dbReference type="RNAct" id="P42859">
    <property type="molecule type" value="protein"/>
</dbReference>
<dbReference type="GO" id="GO:0005776">
    <property type="term" value="C:autophagosome"/>
    <property type="evidence" value="ECO:0007669"/>
    <property type="project" value="UniProtKB-SubCell"/>
</dbReference>
<dbReference type="GO" id="GO:0030424">
    <property type="term" value="C:axon"/>
    <property type="evidence" value="ECO:0000314"/>
    <property type="project" value="MGI"/>
</dbReference>
<dbReference type="GO" id="GO:0005814">
    <property type="term" value="C:centriole"/>
    <property type="evidence" value="ECO:0000314"/>
    <property type="project" value="MGI"/>
</dbReference>
<dbReference type="GO" id="GO:0005737">
    <property type="term" value="C:cytoplasm"/>
    <property type="evidence" value="ECO:0000314"/>
    <property type="project" value="MGI"/>
</dbReference>
<dbReference type="GO" id="GO:0031410">
    <property type="term" value="C:cytoplasmic vesicle"/>
    <property type="evidence" value="ECO:0000314"/>
    <property type="project" value="MGI"/>
</dbReference>
<dbReference type="GO" id="GO:0005783">
    <property type="term" value="C:endoplasmic reticulum"/>
    <property type="evidence" value="ECO:0000314"/>
    <property type="project" value="UniProtKB"/>
</dbReference>
<dbReference type="GO" id="GO:0098978">
    <property type="term" value="C:glutamatergic synapse"/>
    <property type="evidence" value="ECO:0000314"/>
    <property type="project" value="SynGO"/>
</dbReference>
<dbReference type="GO" id="GO:0016234">
    <property type="term" value="C:inclusion body"/>
    <property type="evidence" value="ECO:0000314"/>
    <property type="project" value="MGI"/>
</dbReference>
<dbReference type="GO" id="GO:0005654">
    <property type="term" value="C:nucleoplasm"/>
    <property type="evidence" value="ECO:0000304"/>
    <property type="project" value="Reactome"/>
</dbReference>
<dbReference type="GO" id="GO:0048471">
    <property type="term" value="C:perinuclear region of cytoplasm"/>
    <property type="evidence" value="ECO:0000314"/>
    <property type="project" value="UniProtKB"/>
</dbReference>
<dbReference type="GO" id="GO:0050809">
    <property type="term" value="F:diazepam binding"/>
    <property type="evidence" value="ECO:0000315"/>
    <property type="project" value="MGI"/>
</dbReference>
<dbReference type="GO" id="GO:0009653">
    <property type="term" value="P:anatomical structure morphogenesis"/>
    <property type="evidence" value="ECO:0000315"/>
    <property type="project" value="MGI"/>
</dbReference>
<dbReference type="GO" id="GO:0009952">
    <property type="term" value="P:anterior/posterior pattern specification"/>
    <property type="evidence" value="ECO:0000315"/>
    <property type="project" value="MGI"/>
</dbReference>
<dbReference type="GO" id="GO:0008306">
    <property type="term" value="P:associative learning"/>
    <property type="evidence" value="ECO:0000315"/>
    <property type="project" value="MGI"/>
</dbReference>
<dbReference type="GO" id="GO:0008088">
    <property type="term" value="P:axo-dendritic transport"/>
    <property type="evidence" value="ECO:0000315"/>
    <property type="project" value="MGI"/>
</dbReference>
<dbReference type="GO" id="GO:0007420">
    <property type="term" value="P:brain development"/>
    <property type="evidence" value="ECO:0000315"/>
    <property type="project" value="MGI"/>
</dbReference>
<dbReference type="GO" id="GO:0090398">
    <property type="term" value="P:cellular senescence"/>
    <property type="evidence" value="ECO:0000315"/>
    <property type="project" value="MGI"/>
</dbReference>
<dbReference type="GO" id="GO:0007417">
    <property type="term" value="P:central nervous system development"/>
    <property type="evidence" value="ECO:0000315"/>
    <property type="project" value="MGI"/>
</dbReference>
<dbReference type="GO" id="GO:0000052">
    <property type="term" value="P:citrulline metabolic process"/>
    <property type="evidence" value="ECO:0000315"/>
    <property type="project" value="MGI"/>
</dbReference>
<dbReference type="GO" id="GO:0008340">
    <property type="term" value="P:determination of adult lifespan"/>
    <property type="evidence" value="ECO:0000315"/>
    <property type="project" value="MGI"/>
</dbReference>
<dbReference type="GO" id="GO:0007029">
    <property type="term" value="P:endoplasmic reticulum organization"/>
    <property type="evidence" value="ECO:0000315"/>
    <property type="project" value="MGI"/>
</dbReference>
<dbReference type="GO" id="GO:0006888">
    <property type="term" value="P:endoplasmic reticulum to Golgi vesicle-mediated transport"/>
    <property type="evidence" value="ECO:0000315"/>
    <property type="project" value="MGI"/>
</dbReference>
<dbReference type="GO" id="GO:0016197">
    <property type="term" value="P:endosomal transport"/>
    <property type="evidence" value="ECO:0000315"/>
    <property type="project" value="MGI"/>
</dbReference>
<dbReference type="GO" id="GO:0007212">
    <property type="term" value="P:G protein-coupled dopamine receptor signaling pathway"/>
    <property type="evidence" value="ECO:0000315"/>
    <property type="project" value="MGI"/>
</dbReference>
<dbReference type="GO" id="GO:0007369">
    <property type="term" value="P:gastrulation"/>
    <property type="evidence" value="ECO:0000315"/>
    <property type="project" value="MGI"/>
</dbReference>
<dbReference type="GO" id="GO:0010467">
    <property type="term" value="P:gene expression"/>
    <property type="evidence" value="ECO:0000315"/>
    <property type="project" value="MGI"/>
</dbReference>
<dbReference type="GO" id="GO:0007625">
    <property type="term" value="P:grooming behavior"/>
    <property type="evidence" value="ECO:0000315"/>
    <property type="project" value="MGI"/>
</dbReference>
<dbReference type="GO" id="GO:0042445">
    <property type="term" value="P:hormone metabolic process"/>
    <property type="evidence" value="ECO:0000315"/>
    <property type="project" value="MGI"/>
</dbReference>
<dbReference type="GO" id="GO:0030073">
    <property type="term" value="P:insulin secretion"/>
    <property type="evidence" value="ECO:0000315"/>
    <property type="project" value="MGI"/>
</dbReference>
<dbReference type="GO" id="GO:0019244">
    <property type="term" value="P:lactate biosynthetic process from pyruvate"/>
    <property type="evidence" value="ECO:0000315"/>
    <property type="project" value="MGI"/>
</dbReference>
<dbReference type="GO" id="GO:0007612">
    <property type="term" value="P:learning"/>
    <property type="evidence" value="ECO:0000315"/>
    <property type="project" value="MGI"/>
</dbReference>
<dbReference type="GO" id="GO:0007611">
    <property type="term" value="P:learning or memory"/>
    <property type="evidence" value="ECO:0000315"/>
    <property type="project" value="MGI"/>
</dbReference>
<dbReference type="GO" id="GO:0007626">
    <property type="term" value="P:locomotory behavior"/>
    <property type="evidence" value="ECO:0000315"/>
    <property type="project" value="MGI"/>
</dbReference>
<dbReference type="GO" id="GO:0006839">
    <property type="term" value="P:mitochondrial transport"/>
    <property type="evidence" value="ECO:0000315"/>
    <property type="project" value="MGI"/>
</dbReference>
<dbReference type="GO" id="GO:0007005">
    <property type="term" value="P:mitochondrion organization"/>
    <property type="evidence" value="ECO:0000315"/>
    <property type="project" value="MGI"/>
</dbReference>
<dbReference type="GO" id="GO:0060586">
    <property type="term" value="P:multicellular organismal-level iron ion homeostasis"/>
    <property type="evidence" value="ECO:0000315"/>
    <property type="project" value="MGI"/>
</dbReference>
<dbReference type="GO" id="GO:0043066">
    <property type="term" value="P:negative regulation of apoptotic process"/>
    <property type="evidence" value="ECO:0000314"/>
    <property type="project" value="MGI"/>
</dbReference>
<dbReference type="GO" id="GO:0021990">
    <property type="term" value="P:neural plate formation"/>
    <property type="evidence" value="ECO:0000315"/>
    <property type="project" value="MGI"/>
</dbReference>
<dbReference type="GO" id="GO:0022008">
    <property type="term" value="P:neurogenesis"/>
    <property type="evidence" value="ECO:0000315"/>
    <property type="project" value="MGI"/>
</dbReference>
<dbReference type="GO" id="GO:0048666">
    <property type="term" value="P:neuron development"/>
    <property type="evidence" value="ECO:0000315"/>
    <property type="project" value="MGI"/>
</dbReference>
<dbReference type="GO" id="GO:0021988">
    <property type="term" value="P:olfactory lobe development"/>
    <property type="evidence" value="ECO:0000315"/>
    <property type="project" value="MGI"/>
</dbReference>
<dbReference type="GO" id="GO:0048341">
    <property type="term" value="P:paraxial mesoderm formation"/>
    <property type="evidence" value="ECO:0000315"/>
    <property type="project" value="MGI"/>
</dbReference>
<dbReference type="GO" id="GO:0030072">
    <property type="term" value="P:peptide hormone secretion"/>
    <property type="evidence" value="ECO:0000315"/>
    <property type="project" value="MGI"/>
</dbReference>
<dbReference type="GO" id="GO:1905291">
    <property type="term" value="P:positive regulation of CAMKK-AMPK signaling cascade"/>
    <property type="evidence" value="ECO:0000315"/>
    <property type="project" value="ARUK-UCL"/>
</dbReference>
<dbReference type="GO" id="GO:1905505">
    <property type="term" value="P:positive regulation of motile cilium assembly"/>
    <property type="evidence" value="ECO:0000315"/>
    <property type="project" value="MGI"/>
</dbReference>
<dbReference type="GO" id="GO:1902857">
    <property type="term" value="P:positive regulation of non-motile cilium assembly"/>
    <property type="evidence" value="ECO:0000315"/>
    <property type="project" value="MGI"/>
</dbReference>
<dbReference type="GO" id="GO:0099527">
    <property type="term" value="P:postsynapse to nucleus signaling pathway"/>
    <property type="evidence" value="ECO:0000314"/>
    <property type="project" value="SynGO"/>
</dbReference>
<dbReference type="GO" id="GO:0071539">
    <property type="term" value="P:protein localization to centrosome"/>
    <property type="evidence" value="ECO:0000315"/>
    <property type="project" value="MGI"/>
</dbReference>
<dbReference type="GO" id="GO:0034504">
    <property type="term" value="P:protein localization to nucleus"/>
    <property type="evidence" value="ECO:0000315"/>
    <property type="project" value="MGI"/>
</dbReference>
<dbReference type="GO" id="GO:0019805">
    <property type="term" value="P:quinolinate biosynthetic process"/>
    <property type="evidence" value="ECO:0000315"/>
    <property type="project" value="MGI"/>
</dbReference>
<dbReference type="GO" id="GO:0010468">
    <property type="term" value="P:regulation of gene expression"/>
    <property type="evidence" value="ECO:0000315"/>
    <property type="project" value="ARUK-UCL"/>
</dbReference>
<dbReference type="GO" id="GO:0043523">
    <property type="term" value="P:regulation of neuron apoptotic process"/>
    <property type="evidence" value="ECO:0000315"/>
    <property type="project" value="ARUK-UCL"/>
</dbReference>
<dbReference type="GO" id="GO:1900180">
    <property type="term" value="P:regulation of protein localization to nucleus"/>
    <property type="evidence" value="ECO:0000315"/>
    <property type="project" value="ARUK-UCL"/>
</dbReference>
<dbReference type="GO" id="GO:0048167">
    <property type="term" value="P:regulation of synaptic plasticity"/>
    <property type="evidence" value="ECO:0000315"/>
    <property type="project" value="MGI"/>
</dbReference>
<dbReference type="GO" id="GO:0051592">
    <property type="term" value="P:response to calcium ion"/>
    <property type="evidence" value="ECO:0000315"/>
    <property type="project" value="MGI"/>
</dbReference>
<dbReference type="GO" id="GO:0035176">
    <property type="term" value="P:social behavior"/>
    <property type="evidence" value="ECO:0000315"/>
    <property type="project" value="MGI"/>
</dbReference>
<dbReference type="GO" id="GO:0007283">
    <property type="term" value="P:spermatogenesis"/>
    <property type="evidence" value="ECO:0000315"/>
    <property type="project" value="MGI"/>
</dbReference>
<dbReference type="GO" id="GO:0021756">
    <property type="term" value="P:striatum development"/>
    <property type="evidence" value="ECO:0000315"/>
    <property type="project" value="MGI"/>
</dbReference>
<dbReference type="GO" id="GO:0000050">
    <property type="term" value="P:urea cycle"/>
    <property type="evidence" value="ECO:0000315"/>
    <property type="project" value="MGI"/>
</dbReference>
<dbReference type="GO" id="GO:0047496">
    <property type="term" value="P:vesicle transport along microtubule"/>
    <property type="evidence" value="ECO:0000314"/>
    <property type="project" value="MGI"/>
</dbReference>
<dbReference type="GO" id="GO:0008542">
    <property type="term" value="P:visual learning"/>
    <property type="evidence" value="ECO:0000315"/>
    <property type="project" value="MGI"/>
</dbReference>
<dbReference type="FunFam" id="1.25.10.10:FF:000273">
    <property type="entry name" value="Huntingtin"/>
    <property type="match status" value="1"/>
</dbReference>
<dbReference type="FunFam" id="1.25.10.10:FF:000388">
    <property type="entry name" value="Huntingtin"/>
    <property type="match status" value="1"/>
</dbReference>
<dbReference type="Gene3D" id="1.25.10.10">
    <property type="entry name" value="Leucine-rich Repeat Variant"/>
    <property type="match status" value="2"/>
</dbReference>
<dbReference type="InterPro" id="IPR011989">
    <property type="entry name" value="ARM-like"/>
</dbReference>
<dbReference type="InterPro" id="IPR016024">
    <property type="entry name" value="ARM-type_fold"/>
</dbReference>
<dbReference type="InterPro" id="IPR048412">
    <property type="entry name" value="Htt_bridge"/>
</dbReference>
<dbReference type="InterPro" id="IPR048413">
    <property type="entry name" value="Htt_C-HEAT_rpt"/>
</dbReference>
<dbReference type="InterPro" id="IPR048411">
    <property type="entry name" value="Htt_N_HEAT_rpt-1"/>
</dbReference>
<dbReference type="InterPro" id="IPR000091">
    <property type="entry name" value="Huntingtin"/>
</dbReference>
<dbReference type="InterPro" id="IPR028426">
    <property type="entry name" value="Huntingtin_fam"/>
</dbReference>
<dbReference type="InterPro" id="IPR024613">
    <property type="entry name" value="Huntingtin_N_HEAT_rpt-2"/>
</dbReference>
<dbReference type="PANTHER" id="PTHR10170:SF10">
    <property type="entry name" value="HUNTINGTIN"/>
    <property type="match status" value="1"/>
</dbReference>
<dbReference type="PANTHER" id="PTHR10170">
    <property type="entry name" value="HUNTINGTON DISEASE PROTEIN"/>
    <property type="match status" value="1"/>
</dbReference>
<dbReference type="Pfam" id="PF20925">
    <property type="entry name" value="Htt_bridge"/>
    <property type="match status" value="1"/>
</dbReference>
<dbReference type="Pfam" id="PF20927">
    <property type="entry name" value="Htt_C-HEAT"/>
    <property type="match status" value="1"/>
</dbReference>
<dbReference type="Pfam" id="PF12372">
    <property type="entry name" value="Htt_N-HEAT"/>
    <property type="match status" value="1"/>
</dbReference>
<dbReference type="Pfam" id="PF20926">
    <property type="entry name" value="Htt_N-HEAT_1"/>
    <property type="match status" value="1"/>
</dbReference>
<dbReference type="PRINTS" id="PR00375">
    <property type="entry name" value="HUNTINGTIN"/>
</dbReference>
<dbReference type="SUPFAM" id="SSF48371">
    <property type="entry name" value="ARM repeat"/>
    <property type="match status" value="1"/>
</dbReference>
<dbReference type="SUPFAM" id="SSF81995">
    <property type="entry name" value="beta-sandwich domain of Sec23/24"/>
    <property type="match status" value="1"/>
</dbReference>
<evidence type="ECO:0000250" key="1"/>
<evidence type="ECO:0000250" key="2">
    <source>
        <dbReference type="UniProtKB" id="P42858"/>
    </source>
</evidence>
<evidence type="ECO:0000255" key="3"/>
<evidence type="ECO:0000256" key="4">
    <source>
        <dbReference type="SAM" id="MobiDB-lite"/>
    </source>
</evidence>
<evidence type="ECO:0000269" key="5">
    <source>
    </source>
</evidence>
<evidence type="ECO:0000269" key="6">
    <source>
    </source>
</evidence>
<evidence type="ECO:0000269" key="7">
    <source>
    </source>
</evidence>
<evidence type="ECO:0000269" key="8">
    <source>
    </source>
</evidence>
<evidence type="ECO:0000303" key="9">
    <source>
    </source>
</evidence>
<evidence type="ECO:0000305" key="10"/>
<evidence type="ECO:0007744" key="11">
    <source>
    </source>
</evidence>
<comment type="function">
    <molecule>Huntingtin</molecule>
    <text evidence="2">May play a role in microtubule-mediated transport or vesicle function.</text>
</comment>
<comment type="function">
    <molecule>Huntingtin, myristoylated N-terminal fragment</molecule>
    <text evidence="2">Promotes the formation of autophagic vesicles.</text>
</comment>
<comment type="subunit">
    <text evidence="2 6 7">Interacts with PFN1 (By similarity). Interacts through its N-terminus with PRPF40A (By similarity). Interacts with PQBP1 (By similarity). Interacts with SETD2 (By similarity). Interacts with SH3GLB1 (PubMed:12456676). Interacts with SYVN (By similarity). Interacts with TPR; the interaction is inhibited by forms of Huntingtin with expanded polyglutamine stretch (By similarity). Interacts with ZDHHC13 (via ANK repeats) (PubMed:26198635). Interacts with ZDHHC17 (via ANK repeats) (PubMed:26198635). Interacts with F8A1/F8A2/F8A3 (By similarity). Found in a complex with F8A1/F8A2/F8A3, HTT and RAB5A; mediates the recruitment of HTT by RAB5A (By similarity).</text>
</comment>
<comment type="interaction">
    <interactant intactId="EBI-5327353">
        <id>P42859</id>
    </interactant>
    <interactant intactId="EBI-1790419">
        <id>P70677</id>
        <label>Casp3</label>
    </interactant>
    <organismsDiffer>false</organismsDiffer>
    <experiments>2</experiments>
</comment>
<comment type="interaction">
    <interactant intactId="EBI-5327353">
        <id>P42859</id>
    </interactant>
    <interactant intactId="EBI-397872">
        <id>Q02248</id>
        <label>Ctnnb1</label>
    </interactant>
    <organismsDiffer>false</organismsDiffer>
    <experiments>3</experiments>
</comment>
<comment type="interaction">
    <interactant intactId="EBI-5327353">
        <id>P42859</id>
    </interactant>
    <interactant intactId="EBI-1559317">
        <id>Q8CIN4</id>
        <label>Pak2</label>
    </interactant>
    <organismsDiffer>false</organismsDiffer>
    <experiments>2</experiments>
</comment>
<comment type="interaction">
    <interactant intactId="EBI-5327353">
        <id>P42859</id>
    </interactant>
    <interactant intactId="EBI-8390771">
        <id>O70405</id>
        <label>Ulk1</label>
    </interactant>
    <organismsDiffer>false</organismsDiffer>
    <experiments>4</experiments>
</comment>
<comment type="subcellular location">
    <molecule>Huntingtin</molecule>
    <subcellularLocation>
        <location evidence="5">Cytoplasm</location>
    </subcellularLocation>
    <subcellularLocation>
        <location evidence="2">Nucleus</location>
    </subcellularLocation>
    <text evidence="2">Shuttles between cytoplasm and nucleus in a Ran GTPase-independent manner.</text>
</comment>
<comment type="subcellular location">
    <molecule>Huntingtin, myristoylated N-terminal fragment</molecule>
    <subcellularLocation>
        <location evidence="2">Cytoplasmic vesicle</location>
        <location evidence="2">Autophagosome</location>
    </subcellularLocation>
</comment>
<comment type="alternative products">
    <event type="alternative splicing"/>
    <isoform>
        <id>P42859-1</id>
        <name>Long</name>
        <sequence type="displayed"/>
    </isoform>
    <isoform>
        <id>P42859-2</id>
        <name>Short</name>
        <sequence type="described" ref="VSP_004282"/>
    </isoform>
</comment>
<comment type="tissue specificity">
    <text>The highest level is seen throughout the brain, but it is also found in the stomach, heart, testis, adipose tissue, muscle, spleen, liver, and kidney.</text>
</comment>
<comment type="developmental stage">
    <text>Predominant expression in neuronal tissues at all developmental stages. In 14.5 day old embryos, it is also detected in non-neuronal tissues. This expression is down-regulated in later stages of development.</text>
</comment>
<comment type="domain">
    <text evidence="2">The N-terminal Gln-rich and Pro-rich domain has great conformational flexibility and is likely to exist in a fluctuating equilibrium of alpha-helical, random coil, and extended conformations.</text>
</comment>
<comment type="PTM">
    <text evidence="2">Phosphorylation at Ser-1159 and Ser-1179 by CDK5 in response to DNA damage in nuclei of neurons protects neurons against polyglutamine expansion as well as DNA damage mediated toxicity.</text>
</comment>
<comment type="PTM">
    <molecule>Huntingtin</molecule>
    <text evidence="2">Cleaved by caspases downstream of the polyglutamine stretch.</text>
</comment>
<comment type="PTM">
    <molecule>Huntingtin, myristoylated N-terminal fragment</molecule>
    <text evidence="2">Myristoylated at Gly-530, following proteolytic cleavage at Asp-529.</text>
</comment>
<comment type="polymorphism">
    <text evidence="8">The poly-Gln region does not appear to be polymorphic, explaining the absence of a murine HD-like disorder (PubMed:8009370).</text>
</comment>
<comment type="miscellaneous">
    <molecule>Isoform Short</molecule>
    <text evidence="10">Cannot be explained by a simple splicing event.</text>
</comment>
<comment type="similarity">
    <text evidence="10">Belongs to the huntingtin family.</text>
</comment>
<keyword id="KW-0007">Acetylation</keyword>
<keyword id="KW-0025">Alternative splicing</keyword>
<keyword id="KW-0963">Cytoplasm</keyword>
<keyword id="KW-0968">Cytoplasmic vesicle</keyword>
<keyword id="KW-0449">Lipoprotein</keyword>
<keyword id="KW-0519">Myristate</keyword>
<keyword id="KW-0539">Nucleus</keyword>
<keyword id="KW-0597">Phosphoprotein</keyword>
<keyword id="KW-1185">Reference proteome</keyword>
<keyword id="KW-0677">Repeat</keyword>
<gene>
    <name type="primary">Htt</name>
    <name type="synonym">Hd</name>
    <name type="synonym">Hdh</name>
</gene>
<feature type="chain" id="PRO_0000083943" description="Huntingtin">
    <location>
        <begin position="1"/>
        <end position="3119"/>
    </location>
</feature>
<feature type="chain" id="PRO_0000447487" description="Huntingtin, myristoylated N-terminal fragment" evidence="2">
    <location>
        <begin position="530"/>
        <end position="563"/>
    </location>
</feature>
<feature type="repeat" description="HEAT 1">
    <location>
        <begin position="183"/>
        <end position="220"/>
    </location>
</feature>
<feature type="repeat" description="HEAT 2">
    <location>
        <begin position="225"/>
        <end position="262"/>
    </location>
</feature>
<feature type="repeat" description="HEAT 3">
    <location>
        <begin position="782"/>
        <end position="819"/>
    </location>
</feature>
<feature type="repeat" description="HEAT 4">
    <location>
        <begin position="882"/>
        <end position="920"/>
    </location>
</feature>
<feature type="repeat" description="HEAT 5">
    <location>
        <begin position="1404"/>
        <end position="1441"/>
    </location>
</feature>
<feature type="region of interest" description="Disordered" evidence="4">
    <location>
        <begin position="1"/>
        <end position="65"/>
    </location>
</feature>
<feature type="region of interest" description="Interaction with ZDHHC17" evidence="2">
    <location>
        <begin position="470"/>
        <end position="481"/>
    </location>
</feature>
<feature type="region of interest" description="Disordered" evidence="4">
    <location>
        <begin position="495"/>
        <end position="558"/>
    </location>
</feature>
<feature type="region of interest" description="Disordered" evidence="4">
    <location>
        <begin position="1146"/>
        <end position="1204"/>
    </location>
</feature>
<feature type="region of interest" description="Disordered" evidence="4">
    <location>
        <begin position="2610"/>
        <end position="2637"/>
    </location>
</feature>
<feature type="short sequence motif" description="Nuclear export signal" evidence="1">
    <location>
        <begin position="2372"/>
        <end position="2381"/>
    </location>
</feature>
<feature type="compositionally biased region" description="Pro residues" evidence="4">
    <location>
        <begin position="24"/>
        <end position="60"/>
    </location>
</feature>
<feature type="compositionally biased region" description="Polar residues" evidence="4">
    <location>
        <begin position="529"/>
        <end position="558"/>
    </location>
</feature>
<feature type="compositionally biased region" description="Low complexity" evidence="4">
    <location>
        <begin position="1149"/>
        <end position="1160"/>
    </location>
</feature>
<feature type="compositionally biased region" description="Polar residues" evidence="4">
    <location>
        <begin position="1189"/>
        <end position="1204"/>
    </location>
</feature>
<feature type="compositionally biased region" description="Acidic residues" evidence="4">
    <location>
        <begin position="2611"/>
        <end position="2622"/>
    </location>
</feature>
<feature type="site" description="Cleavage; by caspase-3" evidence="2">
    <location>
        <begin position="490"/>
        <end position="491"/>
    </location>
</feature>
<feature type="site" description="Cleavage; by caspase-3" evidence="3">
    <location>
        <begin position="507"/>
        <end position="508"/>
    </location>
</feature>
<feature type="site" description="Cleavage; by caspase-3" evidence="2">
    <location>
        <begin position="529"/>
        <end position="530"/>
    </location>
</feature>
<feature type="site" description="Cleavage; by caspase-6" evidence="2">
    <location>
        <begin position="563"/>
        <end position="564"/>
    </location>
</feature>
<feature type="modified residue" description="N6-acetyllysine" evidence="2">
    <location>
        <position position="9"/>
    </location>
</feature>
<feature type="modified residue" description="N6-acetyllysine" evidence="2">
    <location>
        <position position="155"/>
    </location>
</feature>
<feature type="modified residue" description="N6-acetyllysine" evidence="2">
    <location>
        <position position="213"/>
    </location>
</feature>
<feature type="modified residue" description="N6-acetyllysine" evidence="2">
    <location>
        <position position="322"/>
    </location>
</feature>
<feature type="modified residue" description="Phosphoserine" evidence="11">
    <location>
        <position position="396"/>
    </location>
</feature>
<feature type="modified residue" description="Phosphoserine" evidence="11">
    <location>
        <position position="398"/>
    </location>
</feature>
<feature type="modified residue" description="Phosphoserine" evidence="11">
    <location>
        <position position="411"/>
    </location>
</feature>
<feature type="modified residue" description="N6-acetyllysine" evidence="2">
    <location>
        <position position="421"/>
    </location>
</feature>
<feature type="modified residue" description="Phosphoserine" evidence="2">
    <location>
        <position position="620"/>
    </location>
</feature>
<feature type="modified residue" description="Phosphoserine" evidence="2">
    <location>
        <position position="623"/>
    </location>
</feature>
<feature type="modified residue" description="Phosphoserine; by CDK5" evidence="2">
    <location>
        <position position="1159"/>
    </location>
</feature>
<feature type="modified residue" description="Phosphoserine; by CDK5" evidence="2">
    <location>
        <position position="1179"/>
    </location>
</feature>
<feature type="modified residue" description="Phosphoserine" evidence="11">
    <location>
        <position position="1853"/>
    </location>
</feature>
<feature type="lipid moiety-binding region" description="N-myristoyl glycine" evidence="2">
    <location>
        <position position="530"/>
    </location>
</feature>
<feature type="splice variant" id="VSP_004282" description="In isoform Short." evidence="9">
    <location>
        <begin position="1522"/>
        <end position="2001"/>
    </location>
</feature>
<feature type="sequence conflict" description="In Ref. 1; AAA37799/AAA37800 and 4; AAA91085." evidence="10" ref="1 4">
    <original>A</original>
    <variation>G</variation>
    <location>
        <position position="2"/>
    </location>
</feature>
<feature type="sequence conflict" description="In Ref. 2; AAA89100." evidence="10" ref="2">
    <original>A</original>
    <variation>P</variation>
    <location>
        <position position="29"/>
    </location>
</feature>
<feature type="sequence conflict" description="In Ref. 2; AAA89100 and 4; AAA91085." evidence="10" ref="2 4">
    <original>N</original>
    <variation>D</variation>
    <location>
        <position position="116"/>
    </location>
</feature>
<feature type="sequence conflict" description="In Ref. 1; AAA37799/AAA37800." evidence="10" ref="1">
    <original>M</original>
    <variation>L</variation>
    <location>
        <position position="138"/>
    </location>
</feature>
<feature type="sequence conflict" description="In Ref. 1; AAA37799/AAA37800." evidence="10" ref="1">
    <original>S</original>
    <variation>P</variation>
    <location>
        <position position="521"/>
    </location>
</feature>
<feature type="sequence conflict" description="In Ref. 1; AAA37799/AAA37800." evidence="10" ref="1">
    <original>A</original>
    <variation>P</variation>
    <location>
        <position position="524"/>
    </location>
</feature>
<feature type="sequence conflict" description="In Ref. 1; AAA37799/AAA37800." evidence="10" ref="1">
    <original>A</original>
    <variation>P</variation>
    <location>
        <position position="533"/>
    </location>
</feature>
<feature type="sequence conflict" description="In Ref. 1; AAA37799/AAA37800." evidence="10" ref="1">
    <original>A</original>
    <variation>T</variation>
    <location>
        <position position="607"/>
    </location>
</feature>
<feature type="sequence conflict" description="In Ref. 2; AAA89100." evidence="10" ref="2">
    <original>D</original>
    <variation>E</variation>
    <location>
        <position position="769"/>
    </location>
</feature>
<feature type="sequence conflict" description="In Ref. 1; AAA37799/AAA37800." evidence="10" ref="1">
    <original>S</original>
    <variation>R</variation>
    <location>
        <position position="972"/>
    </location>
</feature>
<feature type="sequence conflict" description="In Ref. 1; AAA37799/AAA37800." evidence="10" ref="1">
    <original>W</original>
    <variation>C</variation>
    <location>
        <position position="1106"/>
    </location>
</feature>
<feature type="sequence conflict" description="In Ref. 1; AAA37799/AAA37800." evidence="10" ref="1">
    <original>T</original>
    <variation>N</variation>
    <location>
        <position position="1240"/>
    </location>
</feature>
<feature type="sequence conflict" description="In Ref. 1; AAA37799/AAA37800." evidence="10" ref="1">
    <original>N</original>
    <variation>T</variation>
    <location>
        <position position="1384"/>
    </location>
</feature>
<feature type="sequence conflict" description="In Ref. 1; AAA37799." evidence="10" ref="1">
    <original>H</original>
    <variation>Y</variation>
    <location>
        <position position="1827"/>
    </location>
</feature>
<feature type="sequence conflict" description="In Ref. 1; AAA37799." evidence="10" ref="1">
    <original>PF</original>
    <variation>SS</variation>
    <location>
        <begin position="1979"/>
        <end position="1980"/>
    </location>
</feature>
<feature type="sequence conflict" description="In Ref. 1; AAA37799/AAA37800." evidence="10" ref="1">
    <original>D</original>
    <variation>G</variation>
    <location>
        <position position="2062"/>
    </location>
</feature>
<feature type="sequence conflict" description="In Ref. 1; AAA37799/AAA37800." evidence="10" ref="1">
    <original>S</original>
    <variation>N</variation>
    <location>
        <position position="2570"/>
    </location>
</feature>
<feature type="sequence conflict" description="In Ref. 1; AAA37799/AAA37800." evidence="10" ref="1">
    <original>E</original>
    <variation>V</variation>
    <location>
        <position position="2866"/>
    </location>
</feature>
<feature type="sequence conflict" description="In Ref. 1; AAA37799/AAA37800." evidence="10" ref="1">
    <original>V</original>
    <variation>G</variation>
    <location>
        <position position="2877"/>
    </location>
</feature>
<feature type="sequence conflict" description="In Ref. 1; AAA37799/AAA37800." evidence="10" ref="1">
    <original>D</original>
    <variation>G</variation>
    <location>
        <position position="2882"/>
    </location>
</feature>
<feature type="sequence conflict" description="In Ref. 1; AAA37799/AAA37800." evidence="10" ref="1">
    <original>Q</original>
    <variation>H</variation>
    <location>
        <position position="2887"/>
    </location>
</feature>
<feature type="sequence conflict" description="In Ref. 1; AAA37799/AAA37800." evidence="10" ref="1">
    <original>A</original>
    <variation>T</variation>
    <location>
        <position position="2915"/>
    </location>
</feature>
<feature type="sequence conflict" description="In Ref. 3; AAC52218." evidence="10" ref="3">
    <original>P</original>
    <variation>S</variation>
    <location>
        <position position="3025"/>
    </location>
</feature>
<feature type="sequence conflict" description="In Ref. 1; AAA37799/AAA37800." evidence="10" ref="1">
    <original>QV</original>
    <variation>LM</variation>
    <location>
        <begin position="3062"/>
        <end position="3063"/>
    </location>
</feature>
<feature type="sequence conflict" description="In Ref. 1; AAA37799/AAA37800." evidence="10" ref="1">
    <original>VV</original>
    <variation>EE</variation>
    <location>
        <begin position="3095"/>
        <end position="3096"/>
    </location>
</feature>
<name>HD_MOUSE</name>
<proteinExistence type="evidence at protein level"/>
<reference key="1">
    <citation type="journal article" date="1994" name="Hum. Mol. Genet.">
        <title>Sequence of the murine Huntington disease gene: evidence for conservation, alternate splicing and polymorphism in a triplet (CCG) repeat.</title>
        <authorList>
            <person name="Lin B."/>
            <person name="Nasir J."/>
            <person name="Macdonald H."/>
            <person name="Hutchinson G."/>
            <person name="Graham R.K."/>
            <person name="Rommens J.M."/>
            <person name="Hayden M.R."/>
        </authorList>
    </citation>
    <scope>NUCLEOTIDE SEQUENCE [MRNA] (ISOFORMS LONG AND SHORT)</scope>
    <source>
        <strain>C57BL/6J</strain>
        <tissue>Brain</tissue>
        <tissue>Spleen</tissue>
    </source>
</reference>
<reference key="2">
    <citation type="journal article" date="1994" name="Somat. Cell Mol. Genet.">
        <title>Mouse Huntington's disease gene homolog (Hdh).</title>
        <authorList>
            <person name="Barnes G.T."/>
            <person name="Duyao M.P."/>
            <person name="Ambrose C.M."/>
            <person name="McNeil S."/>
            <person name="Persichetti F."/>
            <person name="Srinidhi J."/>
            <person name="Gusella J.F."/>
            <person name="Macdonald M.E."/>
        </authorList>
    </citation>
    <scope>NUCLEOTIDE SEQUENCE [MRNA]</scope>
    <scope>POLYMORPHISM</scope>
</reference>
<reference key="3">
    <citation type="journal article" date="1995" name="Nat. Genet.">
        <title>Cellular localization of the Huntington's disease protein and discrimination of the normal and mutated form.</title>
        <authorList>
            <person name="Trottier Y."/>
            <person name="Devys D."/>
            <person name="Imbert G."/>
            <person name="Saudou F."/>
            <person name="An I."/>
            <person name="Lutz Y."/>
            <person name="Weber C."/>
            <person name="Agid Y."/>
            <person name="Hirsch E.C."/>
            <person name="Mandel J.-L."/>
        </authorList>
    </citation>
    <scope>NUCLEOTIDE SEQUENCE [MRNA]</scope>
</reference>
<reference key="4">
    <citation type="journal article" date="1995" name="Genomics">
        <title>Structural analysis of the 5' region of mouse and human Huntington disease genes reveals conservation of putative promoter region and di- and trinucleotide polymorphisms.</title>
        <authorList>
            <person name="Lin B."/>
            <person name="Nasir J."/>
            <person name="Kalchman M.A."/>
            <person name="McDonald H."/>
            <person name="Zeisler J."/>
            <person name="Goldberg Y.P."/>
            <person name="Hayden M.R."/>
        </authorList>
    </citation>
    <scope>NUCLEOTIDE SEQUENCE [GENOMIC DNA] OF 1-181</scope>
</reference>
<reference key="5">
    <citation type="journal article" date="2001" name="J. Biol. Chem.">
        <title>Isolation of a 40-kDa Huntingtin-associated protein.</title>
        <authorList>
            <person name="Peters M.F."/>
            <person name="Ross C.A."/>
        </authorList>
    </citation>
    <scope>SUBCELLULAR LOCATION</scope>
</reference>
<reference key="6">
    <citation type="journal article" date="2003" name="J. Biol. Chem.">
        <title>Characterization of endophilin B1b, a brain-specific membrane-associated lysophosphatidic acid acyl transferase with properties distinct from endophilin A1.</title>
        <authorList>
            <person name="Modregger J."/>
            <person name="Schmidt A.A."/>
            <person name="Ritter B."/>
            <person name="Huttner W.B."/>
            <person name="Plomann M."/>
        </authorList>
    </citation>
    <scope>INTERACTION WITH SH3GLB1</scope>
</reference>
<reference key="7">
    <citation type="journal article" date="2007" name="Proc. Natl. Acad. Sci. U.S.A.">
        <title>Large-scale phosphorylation analysis of mouse liver.</title>
        <authorList>
            <person name="Villen J."/>
            <person name="Beausoleil S.A."/>
            <person name="Gerber S.A."/>
            <person name="Gygi S.P."/>
        </authorList>
    </citation>
    <scope>IDENTIFICATION BY MASS SPECTROMETRY [LARGE SCALE ANALYSIS]</scope>
    <source>
        <tissue>Liver</tissue>
    </source>
</reference>
<reference key="8">
    <citation type="journal article" date="2010" name="Cell">
        <title>A tissue-specific atlas of mouse protein phosphorylation and expression.</title>
        <authorList>
            <person name="Huttlin E.L."/>
            <person name="Jedrychowski M.P."/>
            <person name="Elias J.E."/>
            <person name="Goswami T."/>
            <person name="Rad R."/>
            <person name="Beausoleil S.A."/>
            <person name="Villen J."/>
            <person name="Haas W."/>
            <person name="Sowa M.E."/>
            <person name="Gygi S.P."/>
        </authorList>
    </citation>
    <scope>PHOSPHORYLATION [LARGE SCALE ANALYSIS] AT SER-396; SER-398; SER-411 AND SER-1853</scope>
    <scope>IDENTIFICATION BY MASS SPECTROMETRY [LARGE SCALE ANALYSIS]</scope>
    <source>
        <tissue>Brain</tissue>
        <tissue>Brown adipose tissue</tissue>
        <tissue>Heart</tissue>
        <tissue>Kidney</tissue>
        <tissue>Liver</tissue>
        <tissue>Lung</tissue>
        <tissue>Pancreas</tissue>
        <tissue>Spleen</tissue>
        <tissue>Testis</tissue>
    </source>
</reference>
<reference key="9">
    <citation type="journal article" date="2015" name="J. Biol. Chem.">
        <title>Identification of a novel sequence motif recognized by the ankyrin repeat domain of zDHHC17/13 S-acyltransferases.</title>
        <authorList>
            <person name="Lemonidis K."/>
            <person name="Sanchez-Perez M.C."/>
            <person name="Chamberlain L.H."/>
        </authorList>
    </citation>
    <scope>INTERACTION WITH ZDHHC17 AND ZDHHC13</scope>
</reference>